<dbReference type="EC" id="6.3.5.-" evidence="1"/>
<dbReference type="EMBL" id="CP000269">
    <property type="protein sequence ID" value="ABR88397.1"/>
    <property type="molecule type" value="Genomic_DNA"/>
</dbReference>
<dbReference type="RefSeq" id="WP_011979419.1">
    <property type="nucleotide sequence ID" value="NC_009659.1"/>
</dbReference>
<dbReference type="SMR" id="A6SUD6"/>
<dbReference type="STRING" id="375286.mma_0193"/>
<dbReference type="KEGG" id="mms:mma_0193"/>
<dbReference type="eggNOG" id="COG0064">
    <property type="taxonomic scope" value="Bacteria"/>
</dbReference>
<dbReference type="HOGENOM" id="CLU_019240_0_0_4"/>
<dbReference type="OrthoDB" id="9804078at2"/>
<dbReference type="Proteomes" id="UP000006388">
    <property type="component" value="Chromosome"/>
</dbReference>
<dbReference type="GO" id="GO:0050566">
    <property type="term" value="F:asparaginyl-tRNA synthase (glutamine-hydrolyzing) activity"/>
    <property type="evidence" value="ECO:0007669"/>
    <property type="project" value="RHEA"/>
</dbReference>
<dbReference type="GO" id="GO:0005524">
    <property type="term" value="F:ATP binding"/>
    <property type="evidence" value="ECO:0007669"/>
    <property type="project" value="UniProtKB-KW"/>
</dbReference>
<dbReference type="GO" id="GO:0050567">
    <property type="term" value="F:glutaminyl-tRNA synthase (glutamine-hydrolyzing) activity"/>
    <property type="evidence" value="ECO:0007669"/>
    <property type="project" value="UniProtKB-UniRule"/>
</dbReference>
<dbReference type="GO" id="GO:0070681">
    <property type="term" value="P:glutaminyl-tRNAGln biosynthesis via transamidation"/>
    <property type="evidence" value="ECO:0007669"/>
    <property type="project" value="TreeGrafter"/>
</dbReference>
<dbReference type="GO" id="GO:0006412">
    <property type="term" value="P:translation"/>
    <property type="evidence" value="ECO:0007669"/>
    <property type="project" value="UniProtKB-UniRule"/>
</dbReference>
<dbReference type="FunFam" id="1.10.10.410:FF:000001">
    <property type="entry name" value="Aspartyl/glutamyl-tRNA(Asn/Gln) amidotransferase subunit B"/>
    <property type="match status" value="1"/>
</dbReference>
<dbReference type="FunFam" id="1.10.150.380:FF:000001">
    <property type="entry name" value="Aspartyl/glutamyl-tRNA(Asn/Gln) amidotransferase subunit B"/>
    <property type="match status" value="1"/>
</dbReference>
<dbReference type="Gene3D" id="1.10.10.410">
    <property type="match status" value="1"/>
</dbReference>
<dbReference type="Gene3D" id="1.10.150.380">
    <property type="entry name" value="GatB domain, N-terminal subdomain"/>
    <property type="match status" value="1"/>
</dbReference>
<dbReference type="HAMAP" id="MF_00121">
    <property type="entry name" value="GatB"/>
    <property type="match status" value="1"/>
</dbReference>
<dbReference type="InterPro" id="IPR017959">
    <property type="entry name" value="Asn/Gln-tRNA_amidoTrfase_suB/E"/>
</dbReference>
<dbReference type="InterPro" id="IPR006075">
    <property type="entry name" value="Asn/Gln-tRNA_Trfase_suB/E_cat"/>
</dbReference>
<dbReference type="InterPro" id="IPR018027">
    <property type="entry name" value="Asn/Gln_amidotransferase"/>
</dbReference>
<dbReference type="InterPro" id="IPR003789">
    <property type="entry name" value="Asn/Gln_tRNA_amidoTrase-B-like"/>
</dbReference>
<dbReference type="InterPro" id="IPR004413">
    <property type="entry name" value="GatB"/>
</dbReference>
<dbReference type="InterPro" id="IPR042114">
    <property type="entry name" value="GatB_C_1"/>
</dbReference>
<dbReference type="InterPro" id="IPR023168">
    <property type="entry name" value="GatB_Yqey_C_2"/>
</dbReference>
<dbReference type="InterPro" id="IPR017958">
    <property type="entry name" value="Gln-tRNA_amidoTrfase_suB_CS"/>
</dbReference>
<dbReference type="InterPro" id="IPR014746">
    <property type="entry name" value="Gln_synth/guanido_kin_cat_dom"/>
</dbReference>
<dbReference type="NCBIfam" id="TIGR00133">
    <property type="entry name" value="gatB"/>
    <property type="match status" value="1"/>
</dbReference>
<dbReference type="NCBIfam" id="NF004012">
    <property type="entry name" value="PRK05477.1-2"/>
    <property type="match status" value="1"/>
</dbReference>
<dbReference type="NCBIfam" id="NF004014">
    <property type="entry name" value="PRK05477.1-4"/>
    <property type="match status" value="1"/>
</dbReference>
<dbReference type="NCBIfam" id="NF004015">
    <property type="entry name" value="PRK05477.1-5"/>
    <property type="match status" value="1"/>
</dbReference>
<dbReference type="PANTHER" id="PTHR11659">
    <property type="entry name" value="GLUTAMYL-TRNA GLN AMIDOTRANSFERASE SUBUNIT B MITOCHONDRIAL AND PROKARYOTIC PET112-RELATED"/>
    <property type="match status" value="1"/>
</dbReference>
<dbReference type="PANTHER" id="PTHR11659:SF0">
    <property type="entry name" value="GLUTAMYL-TRNA(GLN) AMIDOTRANSFERASE SUBUNIT B, MITOCHONDRIAL"/>
    <property type="match status" value="1"/>
</dbReference>
<dbReference type="Pfam" id="PF02934">
    <property type="entry name" value="GatB_N"/>
    <property type="match status" value="1"/>
</dbReference>
<dbReference type="Pfam" id="PF02637">
    <property type="entry name" value="GatB_Yqey"/>
    <property type="match status" value="1"/>
</dbReference>
<dbReference type="SMART" id="SM00845">
    <property type="entry name" value="GatB_Yqey"/>
    <property type="match status" value="1"/>
</dbReference>
<dbReference type="SUPFAM" id="SSF89095">
    <property type="entry name" value="GatB/YqeY motif"/>
    <property type="match status" value="1"/>
</dbReference>
<dbReference type="SUPFAM" id="SSF55931">
    <property type="entry name" value="Glutamine synthetase/guanido kinase"/>
    <property type="match status" value="1"/>
</dbReference>
<dbReference type="PROSITE" id="PS01234">
    <property type="entry name" value="GATB"/>
    <property type="match status" value="1"/>
</dbReference>
<protein>
    <recommendedName>
        <fullName evidence="1">Aspartyl/glutamyl-tRNA(Asn/Gln) amidotransferase subunit B</fullName>
        <shortName evidence="1">Asp/Glu-ADT subunit B</shortName>
        <ecNumber evidence="1">6.3.5.-</ecNumber>
    </recommendedName>
</protein>
<proteinExistence type="inferred from homology"/>
<gene>
    <name evidence="1" type="primary">gatB</name>
    <name type="ordered locus">mma_0193</name>
</gene>
<feature type="chain" id="PRO_1000015975" description="Aspartyl/glutamyl-tRNA(Asn/Gln) amidotransferase subunit B">
    <location>
        <begin position="1"/>
        <end position="486"/>
    </location>
</feature>
<accession>A6SUD6</accession>
<sequence length="486" mass="53146">MQWEVVIGLETHTQLTTQTKIFSGSPTQFGAEPNTQTSPVDLALPGALPVMNRGAVERAIQFGLAIGATIAPHSVFARKNYFYPDLPKGYQISQMDLPIVQGGRVSFALEVDGKTEIRSVQLTRAHLEEDAGKSLHEDYQGMTGIDLNRAGTPLLEIVTEPDMRSAAEAVAYAKALHTLVTWLGICDGNMQEGSFRCDANVSVRPVGQKEYGTRCEIKNLNSFRFLEDAINYEVRRQIELIEDGGRVVQATRLYDPDKKETREMRSKEDAHDYRYFPDPDLPPLVVSAEWIARVQAAMPELPGAMRERFVRDYALSEYDAAVLTQSKGMANYFEAVVAAAGKEQAKPAANWLMGDVASTLNREDIEIAAAPVAAAQLALLLQRIADGTISNKIAKEVFGAMWEAKSDSAKLADELIESKGLKQISDSGALEKIVDDVLAANAKSVEEFRAGKEQAINALMGQAMKASKGKANPAQLTELLKKKLTA</sequence>
<comment type="function">
    <text evidence="1">Allows the formation of correctly charged Asn-tRNA(Asn) or Gln-tRNA(Gln) through the transamidation of misacylated Asp-tRNA(Asn) or Glu-tRNA(Gln) in organisms which lack either or both of asparaginyl-tRNA or glutaminyl-tRNA synthetases. The reaction takes place in the presence of glutamine and ATP through an activated phospho-Asp-tRNA(Asn) or phospho-Glu-tRNA(Gln).</text>
</comment>
<comment type="catalytic activity">
    <reaction evidence="1">
        <text>L-glutamyl-tRNA(Gln) + L-glutamine + ATP + H2O = L-glutaminyl-tRNA(Gln) + L-glutamate + ADP + phosphate + H(+)</text>
        <dbReference type="Rhea" id="RHEA:17521"/>
        <dbReference type="Rhea" id="RHEA-COMP:9681"/>
        <dbReference type="Rhea" id="RHEA-COMP:9684"/>
        <dbReference type="ChEBI" id="CHEBI:15377"/>
        <dbReference type="ChEBI" id="CHEBI:15378"/>
        <dbReference type="ChEBI" id="CHEBI:29985"/>
        <dbReference type="ChEBI" id="CHEBI:30616"/>
        <dbReference type="ChEBI" id="CHEBI:43474"/>
        <dbReference type="ChEBI" id="CHEBI:58359"/>
        <dbReference type="ChEBI" id="CHEBI:78520"/>
        <dbReference type="ChEBI" id="CHEBI:78521"/>
        <dbReference type="ChEBI" id="CHEBI:456216"/>
    </reaction>
</comment>
<comment type="catalytic activity">
    <reaction evidence="1">
        <text>L-aspartyl-tRNA(Asn) + L-glutamine + ATP + H2O = L-asparaginyl-tRNA(Asn) + L-glutamate + ADP + phosphate + 2 H(+)</text>
        <dbReference type="Rhea" id="RHEA:14513"/>
        <dbReference type="Rhea" id="RHEA-COMP:9674"/>
        <dbReference type="Rhea" id="RHEA-COMP:9677"/>
        <dbReference type="ChEBI" id="CHEBI:15377"/>
        <dbReference type="ChEBI" id="CHEBI:15378"/>
        <dbReference type="ChEBI" id="CHEBI:29985"/>
        <dbReference type="ChEBI" id="CHEBI:30616"/>
        <dbReference type="ChEBI" id="CHEBI:43474"/>
        <dbReference type="ChEBI" id="CHEBI:58359"/>
        <dbReference type="ChEBI" id="CHEBI:78515"/>
        <dbReference type="ChEBI" id="CHEBI:78516"/>
        <dbReference type="ChEBI" id="CHEBI:456216"/>
    </reaction>
</comment>
<comment type="subunit">
    <text evidence="1">Heterotrimer of A, B and C subunits.</text>
</comment>
<comment type="similarity">
    <text evidence="1">Belongs to the GatB/GatE family. GatB subfamily.</text>
</comment>
<reference key="1">
    <citation type="journal article" date="2007" name="PLoS Genet.">
        <title>Genome analysis of Minibacterium massiliensis highlights the convergent evolution of water-living bacteria.</title>
        <authorList>
            <person name="Audic S."/>
            <person name="Robert C."/>
            <person name="Campagna B."/>
            <person name="Parinello H."/>
            <person name="Claverie J.-M."/>
            <person name="Raoult D."/>
            <person name="Drancourt M."/>
        </authorList>
    </citation>
    <scope>NUCLEOTIDE SEQUENCE [LARGE SCALE GENOMIC DNA]</scope>
    <source>
        <strain>Marseille</strain>
    </source>
</reference>
<organism>
    <name type="scientific">Janthinobacterium sp. (strain Marseille)</name>
    <name type="common">Minibacterium massiliensis</name>
    <dbReference type="NCBI Taxonomy" id="375286"/>
    <lineage>
        <taxon>Bacteria</taxon>
        <taxon>Pseudomonadati</taxon>
        <taxon>Pseudomonadota</taxon>
        <taxon>Betaproteobacteria</taxon>
        <taxon>Burkholderiales</taxon>
        <taxon>Oxalobacteraceae</taxon>
        <taxon>Janthinobacterium</taxon>
    </lineage>
</organism>
<keyword id="KW-0067">ATP-binding</keyword>
<keyword id="KW-0436">Ligase</keyword>
<keyword id="KW-0547">Nucleotide-binding</keyword>
<keyword id="KW-0648">Protein biosynthesis</keyword>
<name>GATB_JANMA</name>
<evidence type="ECO:0000255" key="1">
    <source>
        <dbReference type="HAMAP-Rule" id="MF_00121"/>
    </source>
</evidence>